<name>RL1_STRPS</name>
<gene>
    <name evidence="1" type="primary">rplA</name>
    <name type="ordered locus">SPCG_0592</name>
</gene>
<organism>
    <name type="scientific">Streptococcus pneumoniae (strain CGSP14)</name>
    <dbReference type="NCBI Taxonomy" id="516950"/>
    <lineage>
        <taxon>Bacteria</taxon>
        <taxon>Bacillati</taxon>
        <taxon>Bacillota</taxon>
        <taxon>Bacilli</taxon>
        <taxon>Lactobacillales</taxon>
        <taxon>Streptococcaceae</taxon>
        <taxon>Streptococcus</taxon>
    </lineage>
</organism>
<reference key="1">
    <citation type="journal article" date="2009" name="BMC Genomics">
        <title>Genome evolution driven by host adaptations results in a more virulent and antimicrobial-resistant Streptococcus pneumoniae serotype 14.</title>
        <authorList>
            <person name="Ding F."/>
            <person name="Tang P."/>
            <person name="Hsu M.-H."/>
            <person name="Cui P."/>
            <person name="Hu S."/>
            <person name="Yu J."/>
            <person name="Chiu C.-H."/>
        </authorList>
    </citation>
    <scope>NUCLEOTIDE SEQUENCE [LARGE SCALE GENOMIC DNA]</scope>
    <source>
        <strain>CGSP14</strain>
    </source>
</reference>
<sequence>MAKKSKQLRAALEKIDSTKAYSVEEAVALAKETNFAKFDATVEVAYNLNIDVKKADQQIRGAMVLPNGTGKTSRVLVFARGAKAEEAKAAGADFVGEDDLVAKINDGWLDFDVVIATPDMMALVGRLGRVLGPRNLMPNPKTGTVTMDVAKAVEESKGGKITYRADRAGNVQAIIGKVSFEAEKLVENFKAFNETIQKVKPATAKGTYVTNLTITTTQGVGIKVDVNSL</sequence>
<feature type="chain" id="PRO_1000141469" description="Large ribosomal subunit protein uL1">
    <location>
        <begin position="1"/>
        <end position="229"/>
    </location>
</feature>
<accession>B2IMU8</accession>
<protein>
    <recommendedName>
        <fullName evidence="1">Large ribosomal subunit protein uL1</fullName>
    </recommendedName>
    <alternativeName>
        <fullName evidence="2">50S ribosomal protein L1</fullName>
    </alternativeName>
</protein>
<dbReference type="EMBL" id="CP001033">
    <property type="protein sequence ID" value="ACB89844.1"/>
    <property type="molecule type" value="Genomic_DNA"/>
</dbReference>
<dbReference type="RefSeq" id="WP_001085677.1">
    <property type="nucleotide sequence ID" value="NC_010582.1"/>
</dbReference>
<dbReference type="SMR" id="B2IMU8"/>
<dbReference type="KEGG" id="spw:SPCG_0592"/>
<dbReference type="HOGENOM" id="CLU_062853_0_0_9"/>
<dbReference type="GO" id="GO:0015934">
    <property type="term" value="C:large ribosomal subunit"/>
    <property type="evidence" value="ECO:0007669"/>
    <property type="project" value="InterPro"/>
</dbReference>
<dbReference type="GO" id="GO:0019843">
    <property type="term" value="F:rRNA binding"/>
    <property type="evidence" value="ECO:0007669"/>
    <property type="project" value="UniProtKB-UniRule"/>
</dbReference>
<dbReference type="GO" id="GO:0003735">
    <property type="term" value="F:structural constituent of ribosome"/>
    <property type="evidence" value="ECO:0007669"/>
    <property type="project" value="InterPro"/>
</dbReference>
<dbReference type="GO" id="GO:0000049">
    <property type="term" value="F:tRNA binding"/>
    <property type="evidence" value="ECO:0007669"/>
    <property type="project" value="UniProtKB-KW"/>
</dbReference>
<dbReference type="GO" id="GO:0006417">
    <property type="term" value="P:regulation of translation"/>
    <property type="evidence" value="ECO:0007669"/>
    <property type="project" value="UniProtKB-KW"/>
</dbReference>
<dbReference type="GO" id="GO:0006412">
    <property type="term" value="P:translation"/>
    <property type="evidence" value="ECO:0007669"/>
    <property type="project" value="UniProtKB-UniRule"/>
</dbReference>
<dbReference type="CDD" id="cd00403">
    <property type="entry name" value="Ribosomal_L1"/>
    <property type="match status" value="1"/>
</dbReference>
<dbReference type="FunFam" id="3.40.50.790:FF:000001">
    <property type="entry name" value="50S ribosomal protein L1"/>
    <property type="match status" value="1"/>
</dbReference>
<dbReference type="Gene3D" id="3.30.190.20">
    <property type="match status" value="1"/>
</dbReference>
<dbReference type="Gene3D" id="3.40.50.790">
    <property type="match status" value="1"/>
</dbReference>
<dbReference type="HAMAP" id="MF_01318_B">
    <property type="entry name" value="Ribosomal_uL1_B"/>
    <property type="match status" value="1"/>
</dbReference>
<dbReference type="InterPro" id="IPR005878">
    <property type="entry name" value="Ribosom_uL1_bac-type"/>
</dbReference>
<dbReference type="InterPro" id="IPR002143">
    <property type="entry name" value="Ribosomal_uL1"/>
</dbReference>
<dbReference type="InterPro" id="IPR023674">
    <property type="entry name" value="Ribosomal_uL1-like"/>
</dbReference>
<dbReference type="InterPro" id="IPR028364">
    <property type="entry name" value="Ribosomal_uL1/biogenesis"/>
</dbReference>
<dbReference type="InterPro" id="IPR016095">
    <property type="entry name" value="Ribosomal_uL1_3-a/b-sand"/>
</dbReference>
<dbReference type="InterPro" id="IPR023673">
    <property type="entry name" value="Ribosomal_uL1_CS"/>
</dbReference>
<dbReference type="NCBIfam" id="TIGR01169">
    <property type="entry name" value="rplA_bact"/>
    <property type="match status" value="1"/>
</dbReference>
<dbReference type="PANTHER" id="PTHR36427">
    <property type="entry name" value="54S RIBOSOMAL PROTEIN L1, MITOCHONDRIAL"/>
    <property type="match status" value="1"/>
</dbReference>
<dbReference type="PANTHER" id="PTHR36427:SF3">
    <property type="entry name" value="LARGE RIBOSOMAL SUBUNIT PROTEIN UL1M"/>
    <property type="match status" value="1"/>
</dbReference>
<dbReference type="Pfam" id="PF00687">
    <property type="entry name" value="Ribosomal_L1"/>
    <property type="match status" value="1"/>
</dbReference>
<dbReference type="PIRSF" id="PIRSF002155">
    <property type="entry name" value="Ribosomal_L1"/>
    <property type="match status" value="1"/>
</dbReference>
<dbReference type="SUPFAM" id="SSF56808">
    <property type="entry name" value="Ribosomal protein L1"/>
    <property type="match status" value="1"/>
</dbReference>
<dbReference type="PROSITE" id="PS01199">
    <property type="entry name" value="RIBOSOMAL_L1"/>
    <property type="match status" value="1"/>
</dbReference>
<evidence type="ECO:0000255" key="1">
    <source>
        <dbReference type="HAMAP-Rule" id="MF_01318"/>
    </source>
</evidence>
<evidence type="ECO:0000305" key="2"/>
<comment type="function">
    <text evidence="1">Binds directly to 23S rRNA. The L1 stalk is quite mobile in the ribosome, and is involved in E site tRNA release.</text>
</comment>
<comment type="function">
    <text evidence="1">Protein L1 is also a translational repressor protein, it controls the translation of the L11 operon by binding to its mRNA.</text>
</comment>
<comment type="subunit">
    <text evidence="1">Part of the 50S ribosomal subunit.</text>
</comment>
<comment type="similarity">
    <text evidence="1">Belongs to the universal ribosomal protein uL1 family.</text>
</comment>
<keyword id="KW-0678">Repressor</keyword>
<keyword id="KW-0687">Ribonucleoprotein</keyword>
<keyword id="KW-0689">Ribosomal protein</keyword>
<keyword id="KW-0694">RNA-binding</keyword>
<keyword id="KW-0699">rRNA-binding</keyword>
<keyword id="KW-0810">Translation regulation</keyword>
<keyword id="KW-0820">tRNA-binding</keyword>
<proteinExistence type="inferred from homology"/>